<feature type="chain" id="PRO_0000256665" description="NADH-ubiquinone oxidoreductase chain 2">
    <location>
        <begin position="1"/>
        <end position="347"/>
    </location>
</feature>
<feature type="transmembrane region" description="Helical" evidence="3">
    <location>
        <begin position="1"/>
        <end position="21"/>
    </location>
</feature>
<feature type="transmembrane region" description="Helical" evidence="3">
    <location>
        <begin position="25"/>
        <end position="45"/>
    </location>
</feature>
<feature type="transmembrane region" description="Helical" evidence="3">
    <location>
        <begin position="59"/>
        <end position="79"/>
    </location>
</feature>
<feature type="transmembrane region" description="Helical" evidence="3">
    <location>
        <begin position="96"/>
        <end position="116"/>
    </location>
</feature>
<feature type="transmembrane region" description="Helical" evidence="3">
    <location>
        <begin position="122"/>
        <end position="142"/>
    </location>
</feature>
<feature type="transmembrane region" description="Helical" evidence="3">
    <location>
        <begin position="150"/>
        <end position="170"/>
    </location>
</feature>
<feature type="transmembrane region" description="Helical" evidence="3">
    <location>
        <begin position="201"/>
        <end position="221"/>
    </location>
</feature>
<feature type="transmembrane region" description="Helical" evidence="3">
    <location>
        <begin position="242"/>
        <end position="262"/>
    </location>
</feature>
<feature type="transmembrane region" description="Helical" evidence="3">
    <location>
        <begin position="274"/>
        <end position="294"/>
    </location>
</feature>
<feature type="transmembrane region" description="Helical" evidence="3">
    <location>
        <begin position="326"/>
        <end position="346"/>
    </location>
</feature>
<accession>Q330A7</accession>
<keyword id="KW-0249">Electron transport</keyword>
<keyword id="KW-0472">Membrane</keyword>
<keyword id="KW-0496">Mitochondrion</keyword>
<keyword id="KW-0999">Mitochondrion inner membrane</keyword>
<keyword id="KW-0520">NAD</keyword>
<keyword id="KW-0679">Respiratory chain</keyword>
<keyword id="KW-1278">Translocase</keyword>
<keyword id="KW-0812">Transmembrane</keyword>
<keyword id="KW-1133">Transmembrane helix</keyword>
<keyword id="KW-0813">Transport</keyword>
<keyword id="KW-0830">Ubiquinone</keyword>
<geneLocation type="mitochondrion"/>
<comment type="function">
    <text evidence="1">Core subunit of the mitochondrial membrane respiratory chain NADH dehydrogenase (Complex I) which catalyzes electron transfer from NADH through the respiratory chain, using ubiquinone as an electron acceptor. Essential for the catalytic activity and assembly of complex I.</text>
</comment>
<comment type="catalytic activity">
    <reaction evidence="1">
        <text>a ubiquinone + NADH + 5 H(+)(in) = a ubiquinol + NAD(+) + 4 H(+)(out)</text>
        <dbReference type="Rhea" id="RHEA:29091"/>
        <dbReference type="Rhea" id="RHEA-COMP:9565"/>
        <dbReference type="Rhea" id="RHEA-COMP:9566"/>
        <dbReference type="ChEBI" id="CHEBI:15378"/>
        <dbReference type="ChEBI" id="CHEBI:16389"/>
        <dbReference type="ChEBI" id="CHEBI:17976"/>
        <dbReference type="ChEBI" id="CHEBI:57540"/>
        <dbReference type="ChEBI" id="CHEBI:57945"/>
        <dbReference type="EC" id="7.1.1.2"/>
    </reaction>
</comment>
<comment type="subunit">
    <text evidence="1 2">Core subunit of respiratory chain NADH dehydrogenase (Complex I) which is composed of 45 different subunits. Interacts with TMEM242 (By similarity).</text>
</comment>
<comment type="subcellular location">
    <subcellularLocation>
        <location evidence="2">Mitochondrion inner membrane</location>
        <topology evidence="3">Multi-pass membrane protein</topology>
    </subcellularLocation>
</comment>
<comment type="similarity">
    <text evidence="4">Belongs to the complex I subunit 2 family.</text>
</comment>
<evidence type="ECO:0000250" key="1">
    <source>
        <dbReference type="UniProtKB" id="P03891"/>
    </source>
</evidence>
<evidence type="ECO:0000250" key="2">
    <source>
        <dbReference type="UniProtKB" id="P03892"/>
    </source>
</evidence>
<evidence type="ECO:0000255" key="3"/>
<evidence type="ECO:0000305" key="4"/>
<organism>
    <name type="scientific">Eidolon helvum</name>
    <name type="common">Straw-colored fruit bat</name>
    <dbReference type="NCBI Taxonomy" id="77214"/>
    <lineage>
        <taxon>Eukaryota</taxon>
        <taxon>Metazoa</taxon>
        <taxon>Chordata</taxon>
        <taxon>Craniata</taxon>
        <taxon>Vertebrata</taxon>
        <taxon>Euteleostomi</taxon>
        <taxon>Mammalia</taxon>
        <taxon>Eutheria</taxon>
        <taxon>Laurasiatheria</taxon>
        <taxon>Chiroptera</taxon>
        <taxon>Yinpterochiroptera</taxon>
        <taxon>Pteropodoidea</taxon>
        <taxon>Pteropodidae</taxon>
        <taxon>Pteropodinae</taxon>
        <taxon>Eidolon</taxon>
    </lineage>
</organism>
<protein>
    <recommendedName>
        <fullName evidence="1">NADH-ubiquinone oxidoreductase chain 2</fullName>
        <ecNumber evidence="1">7.1.1.2</ecNumber>
    </recommendedName>
    <alternativeName>
        <fullName>NADH dehydrogenase subunit 2</fullName>
    </alternativeName>
</protein>
<reference key="1">
    <citation type="submission" date="2003-12" db="EMBL/GenBank/DDBJ databases">
        <title>Bats and birds: flying in the face of mtDNA evolutionary rates.</title>
        <authorList>
            <person name="Worthington Wilmer J.M."/>
            <person name="Schneider C.J."/>
            <person name="Sorenson M.D."/>
        </authorList>
    </citation>
    <scope>NUCLEOTIDE SEQUENCE [GENOMIC DNA]</scope>
    <source>
        <strain>Isolate 3</strain>
    </source>
</reference>
<gene>
    <name evidence="1" type="primary">MT-ND2</name>
    <name type="synonym">MTND2</name>
    <name type="synonym">NADH2</name>
    <name type="synonym">ND2</name>
</gene>
<name>NU2M_EIDHE</name>
<dbReference type="EC" id="7.1.1.2" evidence="1"/>
<dbReference type="EMBL" id="AY504585">
    <property type="protein sequence ID" value="AAS91450.1"/>
    <property type="molecule type" value="Genomic_DNA"/>
</dbReference>
<dbReference type="SMR" id="Q330A7"/>
<dbReference type="GO" id="GO:0005743">
    <property type="term" value="C:mitochondrial inner membrane"/>
    <property type="evidence" value="ECO:0000250"/>
    <property type="project" value="UniProtKB"/>
</dbReference>
<dbReference type="GO" id="GO:0008137">
    <property type="term" value="F:NADH dehydrogenase (ubiquinone) activity"/>
    <property type="evidence" value="ECO:0000250"/>
    <property type="project" value="UniProtKB"/>
</dbReference>
<dbReference type="GO" id="GO:0006120">
    <property type="term" value="P:mitochondrial electron transport, NADH to ubiquinone"/>
    <property type="evidence" value="ECO:0000250"/>
    <property type="project" value="UniProtKB"/>
</dbReference>
<dbReference type="GO" id="GO:0032981">
    <property type="term" value="P:mitochondrial respiratory chain complex I assembly"/>
    <property type="evidence" value="ECO:0000250"/>
    <property type="project" value="UniProtKB"/>
</dbReference>
<dbReference type="InterPro" id="IPR050175">
    <property type="entry name" value="Complex_I_Subunit_2"/>
</dbReference>
<dbReference type="InterPro" id="IPR010933">
    <property type="entry name" value="NADH_DH_su2_C"/>
</dbReference>
<dbReference type="InterPro" id="IPR003917">
    <property type="entry name" value="NADH_UbQ_OxRdtase_chain2"/>
</dbReference>
<dbReference type="InterPro" id="IPR001750">
    <property type="entry name" value="ND/Mrp_TM"/>
</dbReference>
<dbReference type="PANTHER" id="PTHR46552">
    <property type="entry name" value="NADH-UBIQUINONE OXIDOREDUCTASE CHAIN 2"/>
    <property type="match status" value="1"/>
</dbReference>
<dbReference type="PANTHER" id="PTHR46552:SF1">
    <property type="entry name" value="NADH-UBIQUINONE OXIDOREDUCTASE CHAIN 2"/>
    <property type="match status" value="1"/>
</dbReference>
<dbReference type="Pfam" id="PF06444">
    <property type="entry name" value="NADH_dehy_S2_C"/>
    <property type="match status" value="1"/>
</dbReference>
<dbReference type="Pfam" id="PF00361">
    <property type="entry name" value="Proton_antipo_M"/>
    <property type="match status" value="1"/>
</dbReference>
<dbReference type="PRINTS" id="PR01436">
    <property type="entry name" value="NADHDHGNASE2"/>
</dbReference>
<proteinExistence type="inferred from homology"/>
<sequence length="347" mass="38530">MNPLTFAMILLTIMLGTTIVMTSSHWLVVWIGFEMNMLAVIPVLMKKYNPRSMEAATKYFLTQATASMLLMLAIVINLIYSGQWSTTNPLNPTASIIMTLALAMKLGLAPFHFWVPEVTQGIQLSSGLILLTWQKLAPISILYQISSTTNLNLLLAMSILSVAIGGWGGLNQTQLRKIMAYSSIAHMGWMTAIMVYNPTMALLNLVIYILLTTTTFSVFMLNSSTTTLSLSHMWNKTPLLTTALLMTMLSLGGLPPLSGFLPKWMIIQELTKNNSVIVPTTMAITALLNLYFYMRLTYSTSLTTFPSTNNMKIKWQLNNTKPTIHLSPLIILSTLILPLSPILTLLE</sequence>